<reference key="1">
    <citation type="journal article" date="2006" name="J. Bacteriol.">
        <title>Genome sequence of Aeromonas hydrophila ATCC 7966T: jack of all trades.</title>
        <authorList>
            <person name="Seshadri R."/>
            <person name="Joseph S.W."/>
            <person name="Chopra A.K."/>
            <person name="Sha J."/>
            <person name="Shaw J."/>
            <person name="Graf J."/>
            <person name="Haft D.H."/>
            <person name="Wu M."/>
            <person name="Ren Q."/>
            <person name="Rosovitz M.J."/>
            <person name="Madupu R."/>
            <person name="Tallon L."/>
            <person name="Kim M."/>
            <person name="Jin S."/>
            <person name="Vuong H."/>
            <person name="Stine O.C."/>
            <person name="Ali A."/>
            <person name="Horneman A.J."/>
            <person name="Heidelberg J.F."/>
        </authorList>
    </citation>
    <scope>NUCLEOTIDE SEQUENCE [LARGE SCALE GENOMIC DNA]</scope>
    <source>
        <strain>ATCC 7966 / DSM 30187 / BCRC 13018 / CCUG 14551 / JCM 1027 / KCTC 2358 / NCIMB 9240 / NCTC 8049</strain>
    </source>
</reference>
<keyword id="KW-0067">ATP-binding</keyword>
<keyword id="KW-0131">Cell cycle</keyword>
<keyword id="KW-0132">Cell division</keyword>
<keyword id="KW-0133">Cell shape</keyword>
<keyword id="KW-0961">Cell wall biogenesis/degradation</keyword>
<keyword id="KW-0963">Cytoplasm</keyword>
<keyword id="KW-0436">Ligase</keyword>
<keyword id="KW-0547">Nucleotide-binding</keyword>
<keyword id="KW-0573">Peptidoglycan synthesis</keyword>
<keyword id="KW-1185">Reference proteome</keyword>
<feature type="chain" id="PRO_1000071092" description="UDP-N-acetylmuramate--L-alanine ligase">
    <location>
        <begin position="1"/>
        <end position="484"/>
    </location>
</feature>
<feature type="binding site" evidence="1">
    <location>
        <begin position="126"/>
        <end position="132"/>
    </location>
    <ligand>
        <name>ATP</name>
        <dbReference type="ChEBI" id="CHEBI:30616"/>
    </ligand>
</feature>
<protein>
    <recommendedName>
        <fullName evidence="1">UDP-N-acetylmuramate--L-alanine ligase</fullName>
        <ecNumber evidence="1">6.3.2.8</ecNumber>
    </recommendedName>
    <alternativeName>
        <fullName evidence="1">UDP-N-acetylmuramoyl-L-alanine synthetase</fullName>
    </alternativeName>
</protein>
<organism>
    <name type="scientific">Aeromonas hydrophila subsp. hydrophila (strain ATCC 7966 / DSM 30187 / BCRC 13018 / CCUG 14551 / JCM 1027 / KCTC 2358 / NCIMB 9240 / NCTC 8049)</name>
    <dbReference type="NCBI Taxonomy" id="380703"/>
    <lineage>
        <taxon>Bacteria</taxon>
        <taxon>Pseudomonadati</taxon>
        <taxon>Pseudomonadota</taxon>
        <taxon>Gammaproteobacteria</taxon>
        <taxon>Aeromonadales</taxon>
        <taxon>Aeromonadaceae</taxon>
        <taxon>Aeromonas</taxon>
    </lineage>
</organism>
<proteinExistence type="inferred from homology"/>
<evidence type="ECO:0000255" key="1">
    <source>
        <dbReference type="HAMAP-Rule" id="MF_00046"/>
    </source>
</evidence>
<name>MURC_AERHH</name>
<gene>
    <name evidence="1" type="primary">murC</name>
    <name type="ordered locus">AHA_3883</name>
</gene>
<sequence>MTKVELAKLRTVIPEMRRVRRIHFIGIGGAGMGGIAEVLANEGYQVTGSDLARNAVTERLESLGAHIFVGHSAEHVNEASVVVVSTAIKQDNPELLAARELRIPVVRRAEMLAELMRFRHGIAIAGTHGKTTTTSLVASIYAEADRDPTFVIGGLLNSAGTNARLGSSRYLIAEADESDASFLHLQPMVSIVTNIEADHMDTYGGDFSKLKATFIDFLHNLPFYGLAVVCVDDPVIRGMLPEIARPTITYGLSDDADVQVLDFVQTSNRSRFRVRRKDAGELEVTLNLPGIHNALNAAAAIAVATEDGIGDDAIIRALAKFEGVGRRFQQYGEFETGRGKAMLVDDYGHHPSEVKVTINAARAGWPEKRLVMVFQPHRYTRTRDLYEDFADVLSKVDVLVMLEVYAAGEEPIPGADGRALCRSIRSRGSLEPIFVATPDDVPAVLAGLVGEGDLVLTQGAGNVGALARRLGEMKLSIESMKSGA</sequence>
<dbReference type="EC" id="6.3.2.8" evidence="1"/>
<dbReference type="EMBL" id="CP000462">
    <property type="protein sequence ID" value="ABK37350.1"/>
    <property type="molecule type" value="Genomic_DNA"/>
</dbReference>
<dbReference type="RefSeq" id="WP_010635950.1">
    <property type="nucleotide sequence ID" value="NC_008570.1"/>
</dbReference>
<dbReference type="RefSeq" id="YP_858322.1">
    <property type="nucleotide sequence ID" value="NC_008570.1"/>
</dbReference>
<dbReference type="SMR" id="A0KPX1"/>
<dbReference type="STRING" id="380703.AHA_3883"/>
<dbReference type="EnsemblBacteria" id="ABK37350">
    <property type="protein sequence ID" value="ABK37350"/>
    <property type="gene ID" value="AHA_3883"/>
</dbReference>
<dbReference type="GeneID" id="47842861"/>
<dbReference type="KEGG" id="aha:AHA_3883"/>
<dbReference type="PATRIC" id="fig|380703.7.peg.3853"/>
<dbReference type="eggNOG" id="COG0773">
    <property type="taxonomic scope" value="Bacteria"/>
</dbReference>
<dbReference type="HOGENOM" id="CLU_028104_2_2_6"/>
<dbReference type="OrthoDB" id="9804126at2"/>
<dbReference type="UniPathway" id="UPA00219"/>
<dbReference type="PRO" id="PR:A0KPX1"/>
<dbReference type="Proteomes" id="UP000000756">
    <property type="component" value="Chromosome"/>
</dbReference>
<dbReference type="GO" id="GO:0005737">
    <property type="term" value="C:cytoplasm"/>
    <property type="evidence" value="ECO:0007669"/>
    <property type="project" value="UniProtKB-SubCell"/>
</dbReference>
<dbReference type="GO" id="GO:0005524">
    <property type="term" value="F:ATP binding"/>
    <property type="evidence" value="ECO:0007669"/>
    <property type="project" value="UniProtKB-UniRule"/>
</dbReference>
<dbReference type="GO" id="GO:0008763">
    <property type="term" value="F:UDP-N-acetylmuramate-L-alanine ligase activity"/>
    <property type="evidence" value="ECO:0007669"/>
    <property type="project" value="UniProtKB-UniRule"/>
</dbReference>
<dbReference type="GO" id="GO:0051301">
    <property type="term" value="P:cell division"/>
    <property type="evidence" value="ECO:0007669"/>
    <property type="project" value="UniProtKB-KW"/>
</dbReference>
<dbReference type="GO" id="GO:0071555">
    <property type="term" value="P:cell wall organization"/>
    <property type="evidence" value="ECO:0007669"/>
    <property type="project" value="UniProtKB-KW"/>
</dbReference>
<dbReference type="GO" id="GO:0009252">
    <property type="term" value="P:peptidoglycan biosynthetic process"/>
    <property type="evidence" value="ECO:0007669"/>
    <property type="project" value="UniProtKB-UniRule"/>
</dbReference>
<dbReference type="GO" id="GO:0008360">
    <property type="term" value="P:regulation of cell shape"/>
    <property type="evidence" value="ECO:0007669"/>
    <property type="project" value="UniProtKB-KW"/>
</dbReference>
<dbReference type="FunFam" id="3.40.1190.10:FF:000001">
    <property type="entry name" value="UDP-N-acetylmuramate--L-alanine ligase"/>
    <property type="match status" value="1"/>
</dbReference>
<dbReference type="FunFam" id="3.40.50.720:FF:000046">
    <property type="entry name" value="UDP-N-acetylmuramate--L-alanine ligase"/>
    <property type="match status" value="1"/>
</dbReference>
<dbReference type="Gene3D" id="3.90.190.20">
    <property type="entry name" value="Mur ligase, C-terminal domain"/>
    <property type="match status" value="1"/>
</dbReference>
<dbReference type="Gene3D" id="3.40.1190.10">
    <property type="entry name" value="Mur-like, catalytic domain"/>
    <property type="match status" value="1"/>
</dbReference>
<dbReference type="Gene3D" id="3.40.50.720">
    <property type="entry name" value="NAD(P)-binding Rossmann-like Domain"/>
    <property type="match status" value="1"/>
</dbReference>
<dbReference type="HAMAP" id="MF_00046">
    <property type="entry name" value="MurC"/>
    <property type="match status" value="1"/>
</dbReference>
<dbReference type="InterPro" id="IPR036565">
    <property type="entry name" value="Mur-like_cat_sf"/>
</dbReference>
<dbReference type="InterPro" id="IPR004101">
    <property type="entry name" value="Mur_ligase_C"/>
</dbReference>
<dbReference type="InterPro" id="IPR036615">
    <property type="entry name" value="Mur_ligase_C_dom_sf"/>
</dbReference>
<dbReference type="InterPro" id="IPR013221">
    <property type="entry name" value="Mur_ligase_cen"/>
</dbReference>
<dbReference type="InterPro" id="IPR000713">
    <property type="entry name" value="Mur_ligase_N"/>
</dbReference>
<dbReference type="InterPro" id="IPR050061">
    <property type="entry name" value="MurCDEF_pg_biosynth"/>
</dbReference>
<dbReference type="InterPro" id="IPR005758">
    <property type="entry name" value="UDP-N-AcMur_Ala_ligase_MurC"/>
</dbReference>
<dbReference type="NCBIfam" id="TIGR01082">
    <property type="entry name" value="murC"/>
    <property type="match status" value="1"/>
</dbReference>
<dbReference type="PANTHER" id="PTHR43445:SF3">
    <property type="entry name" value="UDP-N-ACETYLMURAMATE--L-ALANINE LIGASE"/>
    <property type="match status" value="1"/>
</dbReference>
<dbReference type="PANTHER" id="PTHR43445">
    <property type="entry name" value="UDP-N-ACETYLMURAMATE--L-ALANINE LIGASE-RELATED"/>
    <property type="match status" value="1"/>
</dbReference>
<dbReference type="Pfam" id="PF01225">
    <property type="entry name" value="Mur_ligase"/>
    <property type="match status" value="1"/>
</dbReference>
<dbReference type="Pfam" id="PF02875">
    <property type="entry name" value="Mur_ligase_C"/>
    <property type="match status" value="1"/>
</dbReference>
<dbReference type="Pfam" id="PF08245">
    <property type="entry name" value="Mur_ligase_M"/>
    <property type="match status" value="1"/>
</dbReference>
<dbReference type="SUPFAM" id="SSF51984">
    <property type="entry name" value="MurCD N-terminal domain"/>
    <property type="match status" value="1"/>
</dbReference>
<dbReference type="SUPFAM" id="SSF53623">
    <property type="entry name" value="MurD-like peptide ligases, catalytic domain"/>
    <property type="match status" value="1"/>
</dbReference>
<dbReference type="SUPFAM" id="SSF53244">
    <property type="entry name" value="MurD-like peptide ligases, peptide-binding domain"/>
    <property type="match status" value="1"/>
</dbReference>
<comment type="function">
    <text evidence="1">Cell wall formation.</text>
</comment>
<comment type="catalytic activity">
    <reaction evidence="1">
        <text>UDP-N-acetyl-alpha-D-muramate + L-alanine + ATP = UDP-N-acetyl-alpha-D-muramoyl-L-alanine + ADP + phosphate + H(+)</text>
        <dbReference type="Rhea" id="RHEA:23372"/>
        <dbReference type="ChEBI" id="CHEBI:15378"/>
        <dbReference type="ChEBI" id="CHEBI:30616"/>
        <dbReference type="ChEBI" id="CHEBI:43474"/>
        <dbReference type="ChEBI" id="CHEBI:57972"/>
        <dbReference type="ChEBI" id="CHEBI:70757"/>
        <dbReference type="ChEBI" id="CHEBI:83898"/>
        <dbReference type="ChEBI" id="CHEBI:456216"/>
        <dbReference type="EC" id="6.3.2.8"/>
    </reaction>
</comment>
<comment type="pathway">
    <text evidence="1">Cell wall biogenesis; peptidoglycan biosynthesis.</text>
</comment>
<comment type="subcellular location">
    <subcellularLocation>
        <location evidence="1">Cytoplasm</location>
    </subcellularLocation>
</comment>
<comment type="similarity">
    <text evidence="1">Belongs to the MurCDEF family.</text>
</comment>
<accession>A0KPX1</accession>